<gene>
    <name type="primary">ndkA</name>
    <name type="synonym">ndk</name>
    <name type="ordered locus">Rv2445c</name>
    <name type="ORF">MTCY428.01</name>
    <name type="ORF">MTV008.01c</name>
</gene>
<accession>P9WJH7</accession>
<accession>L0TCD2</accession>
<accession>P71904</accession>
<accession>P84284</accession>
<keyword id="KW-0002">3D-structure</keyword>
<keyword id="KW-0067">ATP-binding</keyword>
<keyword id="KW-0963">Cytoplasm</keyword>
<keyword id="KW-0418">Kinase</keyword>
<keyword id="KW-0460">Magnesium</keyword>
<keyword id="KW-0479">Metal-binding</keyword>
<keyword id="KW-0546">Nucleotide metabolism</keyword>
<keyword id="KW-0547">Nucleotide-binding</keyword>
<keyword id="KW-1185">Reference proteome</keyword>
<keyword id="KW-0808">Transferase</keyword>
<proteinExistence type="evidence at protein level"/>
<reference key="1">
    <citation type="journal article" date="1998" name="Nature">
        <title>Deciphering the biology of Mycobacterium tuberculosis from the complete genome sequence.</title>
        <authorList>
            <person name="Cole S.T."/>
            <person name="Brosch R."/>
            <person name="Parkhill J."/>
            <person name="Garnier T."/>
            <person name="Churcher C.M."/>
            <person name="Harris D.E."/>
            <person name="Gordon S.V."/>
            <person name="Eiglmeier K."/>
            <person name="Gas S."/>
            <person name="Barry C.E. III"/>
            <person name="Tekaia F."/>
            <person name="Badcock K."/>
            <person name="Basham D."/>
            <person name="Brown D."/>
            <person name="Chillingworth T."/>
            <person name="Connor R."/>
            <person name="Davies R.M."/>
            <person name="Devlin K."/>
            <person name="Feltwell T."/>
            <person name="Gentles S."/>
            <person name="Hamlin N."/>
            <person name="Holroyd S."/>
            <person name="Hornsby T."/>
            <person name="Jagels K."/>
            <person name="Krogh A."/>
            <person name="McLean J."/>
            <person name="Moule S."/>
            <person name="Murphy L.D."/>
            <person name="Oliver S."/>
            <person name="Osborne J."/>
            <person name="Quail M.A."/>
            <person name="Rajandream M.A."/>
            <person name="Rogers J."/>
            <person name="Rutter S."/>
            <person name="Seeger K."/>
            <person name="Skelton S."/>
            <person name="Squares S."/>
            <person name="Squares R."/>
            <person name="Sulston J.E."/>
            <person name="Taylor K."/>
            <person name="Whitehead S."/>
            <person name="Barrell B.G."/>
        </authorList>
    </citation>
    <scope>NUCLEOTIDE SEQUENCE [LARGE SCALE GENOMIC DNA]</scope>
    <source>
        <strain>ATCC 25618 / H37Rv</strain>
    </source>
</reference>
<reference key="2">
    <citation type="journal article" date="2011" name="Mol. Cell. Proteomics">
        <title>Proteogenomic analysis of Mycobacterium tuberculosis by high resolution mass spectrometry.</title>
        <authorList>
            <person name="Kelkar D.S."/>
            <person name="Kumar D."/>
            <person name="Kumar P."/>
            <person name="Balakrishnan L."/>
            <person name="Muthusamy B."/>
            <person name="Yadav A.K."/>
            <person name="Shrivastava P."/>
            <person name="Marimuthu A."/>
            <person name="Anand S."/>
            <person name="Sundaram H."/>
            <person name="Kingsbury R."/>
            <person name="Harsha H.C."/>
            <person name="Nair B."/>
            <person name="Prasad T.S."/>
            <person name="Chauhan D.S."/>
            <person name="Katoch K."/>
            <person name="Katoch V.M."/>
            <person name="Kumar P."/>
            <person name="Chaerkady R."/>
            <person name="Ramachandran S."/>
            <person name="Dash D."/>
            <person name="Pandey A."/>
        </authorList>
    </citation>
    <scope>IDENTIFICATION BY MASS SPECTROMETRY [LARGE SCALE ANALYSIS]</scope>
    <source>
        <strain>ATCC 25618 / H37Rv</strain>
    </source>
</reference>
<reference key="3">
    <citation type="journal article" date="2002" name="Proteins">
        <title>X-ray structure of Mycobacterium tuberculosis nucleoside diphosphate kinase.</title>
        <authorList>
            <person name="Chen Y."/>
            <person name="Morera S."/>
            <person name="Mocan J."/>
            <person name="Lascu I."/>
            <person name="Janin J."/>
        </authorList>
    </citation>
    <scope>X-RAY CRYSTALLOGRAPHY (2.6 ANGSTROMS)</scope>
    <scope>SUBUNIT</scope>
</reference>
<comment type="function">
    <text evidence="1">Major role in the synthesis of nucleoside triphosphates other than ATP. The ATP gamma phosphate is transferred to the NDP beta phosphate via a ping-pong mechanism, using a phosphorylated active-site intermediate.</text>
</comment>
<comment type="catalytic activity">
    <reaction evidence="1">
        <text>a 2'-deoxyribonucleoside 5'-diphosphate + ATP = a 2'-deoxyribonucleoside 5'-triphosphate + ADP</text>
        <dbReference type="Rhea" id="RHEA:44640"/>
        <dbReference type="ChEBI" id="CHEBI:30616"/>
        <dbReference type="ChEBI" id="CHEBI:61560"/>
        <dbReference type="ChEBI" id="CHEBI:73316"/>
        <dbReference type="ChEBI" id="CHEBI:456216"/>
        <dbReference type="EC" id="2.7.4.6"/>
    </reaction>
</comment>
<comment type="catalytic activity">
    <reaction evidence="1">
        <text>a ribonucleoside 5'-diphosphate + ATP = a ribonucleoside 5'-triphosphate + ADP</text>
        <dbReference type="Rhea" id="RHEA:18113"/>
        <dbReference type="ChEBI" id="CHEBI:30616"/>
        <dbReference type="ChEBI" id="CHEBI:57930"/>
        <dbReference type="ChEBI" id="CHEBI:61557"/>
        <dbReference type="ChEBI" id="CHEBI:456216"/>
        <dbReference type="EC" id="2.7.4.6"/>
    </reaction>
</comment>
<comment type="cofactor">
    <cofactor evidence="1">
        <name>Mg(2+)</name>
        <dbReference type="ChEBI" id="CHEBI:18420"/>
    </cofactor>
</comment>
<comment type="subunit">
    <text evidence="2">Homohexamer.</text>
</comment>
<comment type="subcellular location">
    <subcellularLocation>
        <location evidence="1">Cytoplasm</location>
    </subcellularLocation>
</comment>
<comment type="similarity">
    <text evidence="1 3">Belongs to the NDK family.</text>
</comment>
<name>NDK_MYCTU</name>
<evidence type="ECO:0000255" key="1">
    <source>
        <dbReference type="HAMAP-Rule" id="MF_00451"/>
    </source>
</evidence>
<evidence type="ECO:0000269" key="2">
    <source>
    </source>
</evidence>
<evidence type="ECO:0000305" key="3"/>
<evidence type="ECO:0007829" key="4">
    <source>
        <dbReference type="PDB" id="4AND"/>
    </source>
</evidence>
<evidence type="ECO:0007829" key="5">
    <source>
        <dbReference type="PDB" id="4ANE"/>
    </source>
</evidence>
<feature type="chain" id="PRO_0000137010" description="Nucleoside diphosphate kinase">
    <location>
        <begin position="1"/>
        <end position="136"/>
    </location>
</feature>
<feature type="active site" description="Pros-phosphohistidine intermediate" evidence="1">
    <location>
        <position position="117"/>
    </location>
</feature>
<feature type="binding site" evidence="1">
    <location>
        <position position="10"/>
    </location>
    <ligand>
        <name>ATP</name>
        <dbReference type="ChEBI" id="CHEBI:30616"/>
    </ligand>
</feature>
<feature type="binding site" evidence="1">
    <location>
        <position position="58"/>
    </location>
    <ligand>
        <name>ATP</name>
        <dbReference type="ChEBI" id="CHEBI:30616"/>
    </ligand>
</feature>
<feature type="binding site" evidence="1">
    <location>
        <position position="86"/>
    </location>
    <ligand>
        <name>ATP</name>
        <dbReference type="ChEBI" id="CHEBI:30616"/>
    </ligand>
</feature>
<feature type="binding site" evidence="1">
    <location>
        <position position="92"/>
    </location>
    <ligand>
        <name>ATP</name>
        <dbReference type="ChEBI" id="CHEBI:30616"/>
    </ligand>
</feature>
<feature type="binding site" evidence="1">
    <location>
        <position position="104"/>
    </location>
    <ligand>
        <name>ATP</name>
        <dbReference type="ChEBI" id="CHEBI:30616"/>
    </ligand>
</feature>
<feature type="binding site" evidence="1">
    <location>
        <position position="114"/>
    </location>
    <ligand>
        <name>ATP</name>
        <dbReference type="ChEBI" id="CHEBI:30616"/>
    </ligand>
</feature>
<feature type="strand" evidence="5">
    <location>
        <begin position="4"/>
        <end position="9"/>
    </location>
</feature>
<feature type="helix" evidence="5">
    <location>
        <begin position="11"/>
        <end position="15"/>
    </location>
</feature>
<feature type="helix" evidence="5">
    <location>
        <begin position="19"/>
        <end position="28"/>
    </location>
</feature>
<feature type="strand" evidence="5">
    <location>
        <begin position="32"/>
        <end position="39"/>
    </location>
</feature>
<feature type="helix" evidence="5">
    <location>
        <begin position="43"/>
        <end position="49"/>
    </location>
</feature>
<feature type="helix" evidence="5">
    <location>
        <begin position="51"/>
        <end position="53"/>
    </location>
</feature>
<feature type="strand" evidence="4">
    <location>
        <begin position="54"/>
        <end position="56"/>
    </location>
</feature>
<feature type="helix" evidence="5">
    <location>
        <begin position="59"/>
        <end position="66"/>
    </location>
</feature>
<feature type="strand" evidence="5">
    <location>
        <begin position="71"/>
        <end position="78"/>
    </location>
</feature>
<feature type="helix" evidence="5">
    <location>
        <begin position="81"/>
        <end position="89"/>
    </location>
</feature>
<feature type="turn" evidence="5">
    <location>
        <begin position="94"/>
        <end position="97"/>
    </location>
</feature>
<feature type="helix" evidence="5">
    <location>
        <begin position="103"/>
        <end position="107"/>
    </location>
</feature>
<feature type="helix" evidence="5">
    <location>
        <begin position="111"/>
        <end position="113"/>
    </location>
</feature>
<feature type="strand" evidence="5">
    <location>
        <begin position="116"/>
        <end position="118"/>
    </location>
</feature>
<feature type="helix" evidence="5">
    <location>
        <begin position="122"/>
        <end position="132"/>
    </location>
</feature>
<dbReference type="EC" id="2.7.4.6" evidence="1"/>
<dbReference type="EMBL" id="AL123456">
    <property type="protein sequence ID" value="CCP45238.1"/>
    <property type="molecule type" value="Genomic_DNA"/>
</dbReference>
<dbReference type="PIR" id="C70681">
    <property type="entry name" value="C70681"/>
</dbReference>
<dbReference type="RefSeq" id="NP_216961.1">
    <property type="nucleotide sequence ID" value="NC_000962.3"/>
</dbReference>
<dbReference type="RefSeq" id="WP_003412592.1">
    <property type="nucleotide sequence ID" value="NZ_NVQJ01000024.1"/>
</dbReference>
<dbReference type="PDB" id="1K44">
    <property type="method" value="X-ray"/>
    <property type="resolution" value="2.60 A"/>
    <property type="chains" value="A/B/C/D/E/F=1-136"/>
</dbReference>
<dbReference type="PDB" id="4ANC">
    <property type="method" value="X-ray"/>
    <property type="resolution" value="2.80 A"/>
    <property type="chains" value="A=1-136"/>
</dbReference>
<dbReference type="PDB" id="4AND">
    <property type="method" value="X-ray"/>
    <property type="resolution" value="2.81 A"/>
    <property type="chains" value="A/B=1-136"/>
</dbReference>
<dbReference type="PDB" id="4ANE">
    <property type="method" value="X-ray"/>
    <property type="resolution" value="1.90 A"/>
    <property type="chains" value="A/B/C/D/E/F=1-136"/>
</dbReference>
<dbReference type="PDB" id="6QA2">
    <property type="method" value="X-ray"/>
    <property type="resolution" value="2.20 A"/>
    <property type="chains" value="A/B/C/D/E/F=1-136"/>
</dbReference>
<dbReference type="PDBsum" id="1K44"/>
<dbReference type="PDBsum" id="4ANC"/>
<dbReference type="PDBsum" id="4AND"/>
<dbReference type="PDBsum" id="4ANE"/>
<dbReference type="PDBsum" id="6QA2"/>
<dbReference type="SMR" id="P9WJH7"/>
<dbReference type="FunCoup" id="P9WJH7">
    <property type="interactions" value="551"/>
</dbReference>
<dbReference type="STRING" id="83332.Rv2445c"/>
<dbReference type="PaxDb" id="83332-Rv2445c"/>
<dbReference type="DNASU" id="885905"/>
<dbReference type="GeneID" id="45426435"/>
<dbReference type="GeneID" id="885905"/>
<dbReference type="KEGG" id="mtu:Rv2445c"/>
<dbReference type="KEGG" id="mtv:RVBD_2445c"/>
<dbReference type="TubercuList" id="Rv2445c"/>
<dbReference type="eggNOG" id="COG0105">
    <property type="taxonomic scope" value="Bacteria"/>
</dbReference>
<dbReference type="InParanoid" id="P9WJH7"/>
<dbReference type="OrthoDB" id="9801161at2"/>
<dbReference type="PhylomeDB" id="P9WJH7"/>
<dbReference type="BRENDA" id="2.7.4.6">
    <property type="organism ID" value="3445"/>
</dbReference>
<dbReference type="Reactome" id="R-HSA-9636383">
    <property type="pathway name" value="Prevention of phagosomal-lysosomal fusion"/>
</dbReference>
<dbReference type="EvolutionaryTrace" id="P9WJH7"/>
<dbReference type="Proteomes" id="UP000001584">
    <property type="component" value="Chromosome"/>
</dbReference>
<dbReference type="GO" id="GO:0005829">
    <property type="term" value="C:cytosol"/>
    <property type="evidence" value="ECO:0000304"/>
    <property type="project" value="Reactome"/>
</dbReference>
<dbReference type="GO" id="GO:0005576">
    <property type="term" value="C:extracellular region"/>
    <property type="evidence" value="ECO:0007005"/>
    <property type="project" value="MTBBASE"/>
</dbReference>
<dbReference type="GO" id="GO:0005886">
    <property type="term" value="C:plasma membrane"/>
    <property type="evidence" value="ECO:0007005"/>
    <property type="project" value="MTBBASE"/>
</dbReference>
<dbReference type="GO" id="GO:0005524">
    <property type="term" value="F:ATP binding"/>
    <property type="evidence" value="ECO:0007669"/>
    <property type="project" value="UniProtKB-UniRule"/>
</dbReference>
<dbReference type="GO" id="GO:0046872">
    <property type="term" value="F:metal ion binding"/>
    <property type="evidence" value="ECO:0007669"/>
    <property type="project" value="UniProtKB-KW"/>
</dbReference>
<dbReference type="GO" id="GO:0004518">
    <property type="term" value="F:nuclease activity"/>
    <property type="evidence" value="ECO:0000314"/>
    <property type="project" value="MTBBASE"/>
</dbReference>
<dbReference type="GO" id="GO:0004550">
    <property type="term" value="F:nucleoside diphosphate kinase activity"/>
    <property type="evidence" value="ECO:0007669"/>
    <property type="project" value="UniProtKB-UniRule"/>
</dbReference>
<dbReference type="GO" id="GO:0004721">
    <property type="term" value="F:phosphoprotein phosphatase activity"/>
    <property type="evidence" value="ECO:0000304"/>
    <property type="project" value="Reactome"/>
</dbReference>
<dbReference type="GO" id="GO:0006241">
    <property type="term" value="P:CTP biosynthetic process"/>
    <property type="evidence" value="ECO:0007669"/>
    <property type="project" value="UniProtKB-UniRule"/>
</dbReference>
<dbReference type="GO" id="GO:0006183">
    <property type="term" value="P:GTP biosynthetic process"/>
    <property type="evidence" value="ECO:0007669"/>
    <property type="project" value="UniProtKB-UniRule"/>
</dbReference>
<dbReference type="GO" id="GO:0006163">
    <property type="term" value="P:purine nucleotide metabolic process"/>
    <property type="evidence" value="ECO:0000318"/>
    <property type="project" value="GO_Central"/>
</dbReference>
<dbReference type="GO" id="GO:0006220">
    <property type="term" value="P:pyrimidine nucleotide metabolic process"/>
    <property type="evidence" value="ECO:0000318"/>
    <property type="project" value="GO_Central"/>
</dbReference>
<dbReference type="GO" id="GO:0001907">
    <property type="term" value="P:symbiont-mediated killing of host cell"/>
    <property type="evidence" value="ECO:0000269"/>
    <property type="project" value="SigSci"/>
</dbReference>
<dbReference type="GO" id="GO:0141127">
    <property type="term" value="P:symbiont-mediated perturbation of host Rab small GTPase signal transduction"/>
    <property type="evidence" value="ECO:0000269"/>
    <property type="project" value="SigSci"/>
</dbReference>
<dbReference type="GO" id="GO:0052170">
    <property type="term" value="P:symbiont-mediated suppression of host innate immune response"/>
    <property type="evidence" value="ECO:0000304"/>
    <property type="project" value="Reactome"/>
</dbReference>
<dbReference type="GO" id="GO:0006228">
    <property type="term" value="P:UTP biosynthetic process"/>
    <property type="evidence" value="ECO:0007669"/>
    <property type="project" value="UniProtKB-UniRule"/>
</dbReference>
<dbReference type="CDD" id="cd04413">
    <property type="entry name" value="NDPk_I"/>
    <property type="match status" value="1"/>
</dbReference>
<dbReference type="FunFam" id="3.30.70.141:FF:000003">
    <property type="entry name" value="Nucleoside diphosphate kinase"/>
    <property type="match status" value="1"/>
</dbReference>
<dbReference type="Gene3D" id="3.30.70.141">
    <property type="entry name" value="Nucleoside diphosphate kinase-like domain"/>
    <property type="match status" value="1"/>
</dbReference>
<dbReference type="HAMAP" id="MF_00451">
    <property type="entry name" value="NDP_kinase"/>
    <property type="match status" value="1"/>
</dbReference>
<dbReference type="InterPro" id="IPR034907">
    <property type="entry name" value="NDK-like_dom"/>
</dbReference>
<dbReference type="InterPro" id="IPR036850">
    <property type="entry name" value="NDK-like_dom_sf"/>
</dbReference>
<dbReference type="InterPro" id="IPR001564">
    <property type="entry name" value="Nucleoside_diP_kinase"/>
</dbReference>
<dbReference type="NCBIfam" id="NF001908">
    <property type="entry name" value="PRK00668.1"/>
    <property type="match status" value="1"/>
</dbReference>
<dbReference type="PANTHER" id="PTHR11349">
    <property type="entry name" value="NUCLEOSIDE DIPHOSPHATE KINASE"/>
    <property type="match status" value="1"/>
</dbReference>
<dbReference type="Pfam" id="PF00334">
    <property type="entry name" value="NDK"/>
    <property type="match status" value="1"/>
</dbReference>
<dbReference type="PRINTS" id="PR01243">
    <property type="entry name" value="NUCDPKINASE"/>
</dbReference>
<dbReference type="SMART" id="SM00562">
    <property type="entry name" value="NDK"/>
    <property type="match status" value="1"/>
</dbReference>
<dbReference type="SUPFAM" id="SSF54919">
    <property type="entry name" value="Nucleoside diphosphate kinase, NDK"/>
    <property type="match status" value="1"/>
</dbReference>
<dbReference type="PROSITE" id="PS51374">
    <property type="entry name" value="NDPK_LIKE"/>
    <property type="match status" value="1"/>
</dbReference>
<sequence>MTERTLVLIKPDGIERQLIGEIISRIERKGLTIAALQLRTVSAELASQHYAEHEGKPFFGSLLEFITSGPVVAAIVEGTRAIAAVRQLAGGTDPVQAAAPGTIRGDFALETQFNLVHGSDSAESAQREIALWFPGA</sequence>
<protein>
    <recommendedName>
        <fullName evidence="1">Nucleoside diphosphate kinase</fullName>
        <shortName evidence="1">NDK</shortName>
        <shortName>NDKA</shortName>
        <shortName evidence="1">NDP kinase</shortName>
        <ecNumber evidence="1">2.7.4.6</ecNumber>
    </recommendedName>
    <alternativeName>
        <fullName evidence="1">Nucleoside-2-P kinase</fullName>
    </alternativeName>
</protein>
<organism>
    <name type="scientific">Mycobacterium tuberculosis (strain ATCC 25618 / H37Rv)</name>
    <dbReference type="NCBI Taxonomy" id="83332"/>
    <lineage>
        <taxon>Bacteria</taxon>
        <taxon>Bacillati</taxon>
        <taxon>Actinomycetota</taxon>
        <taxon>Actinomycetes</taxon>
        <taxon>Mycobacteriales</taxon>
        <taxon>Mycobacteriaceae</taxon>
        <taxon>Mycobacterium</taxon>
        <taxon>Mycobacterium tuberculosis complex</taxon>
    </lineage>
</organism>